<name>SECA_BORAP</name>
<gene>
    <name evidence="1" type="primary">secA</name>
    <name type="ordered locus">BAPKO_0155</name>
    <name type="ordered locus">BafPKo_0151</name>
</gene>
<sequence length="899" mass="102083">MLKAVLERTIGSKSKRDLKDYLPTLRNINKLERWALLLSDEDFSKETEKLKDELKSGNSLESILERAFTLSREAARRRLKERPYDVQIIAGLALHKGKIIEMKTGEGKTLSSVQAAYLNSLTGDGVIIVTVNDYLAERDSNWMKPVFDLLGVSVGVVLSNMDYELRKAQYAKDITYVTNNELGFDYLRDNMRYDLNEKSLRKFNYCIIDEIDSILIDEARTPLIISGPTEGNTNAYLEVNSLVSFLKECSKDSKTGDYPLEIDDLDGDYTVDEKAKRISFTAKGLNNLEQLLVSKGIISGSMYTDSNFNYVHYMTQALKAHLLFLKNREYIVGDSGVEIVDEFTGRVLTGRRYSDGLHQAIEAKEGVRVANENKTMATITFQNLFRMFNKISGMTGTADTEAKEFHRIYNLDVVVVPTNRLLARIDEDDTIYYTEEFKFNAITDEVYKTYKKGQPVLVGTVSIEKSEILSAMFKSRGIKHEVLNAKNHSREAFIIAEAGAKHAVTIATNMAGRGTDIKLGGNIEHRVRKKIGTNVSLEEFQEAVKNEREDYLKDYNEVKSLGGLYVIGSERHESRRIDNQLRGRSGRQGDPGRSRFYVSLEDDLMRLFAGDNLRSLMGKLGMATGEPITHSLLTKSLINAQKRVEDRNFEIRKHLLEYDDVITKQRDFIYAQRNSILEDTAIKDRILIALEEYLTFLLEGAKSSTVSNVFLNEVNLIFAYMLEGLGSIENINSLDLKAKLMQIAKANLDEKENSIGRDLFNGFLRYEYLRNIDSKFQEHLANLDSLREAVYLRSYANKNPITEYKEEGFLIFSELIKDIKVSTIRRVLQLKLDSNSSNFKSVKKSKNVNSIHKELSGIVINENKSVSNVQVVRSSPKIGRNEPCYCGSGKKYKNCHGKS</sequence>
<dbReference type="EC" id="7.4.2.8" evidence="1"/>
<dbReference type="EMBL" id="CP000395">
    <property type="protein sequence ID" value="ABH01417.1"/>
    <property type="molecule type" value="Genomic_DNA"/>
</dbReference>
<dbReference type="EMBL" id="CP002933">
    <property type="protein sequence ID" value="AEL69384.1"/>
    <property type="molecule type" value="Genomic_DNA"/>
</dbReference>
<dbReference type="RefSeq" id="WP_004790288.1">
    <property type="nucleotide sequence ID" value="NZ_CP160066.1"/>
</dbReference>
<dbReference type="SMR" id="Q0SP11"/>
<dbReference type="STRING" id="29518.BLA32_03535"/>
<dbReference type="GeneID" id="76831690"/>
<dbReference type="KEGG" id="baf:BAPKO_0155"/>
<dbReference type="KEGG" id="bafz:BafPKo_0151"/>
<dbReference type="PATRIC" id="fig|390236.22.peg.149"/>
<dbReference type="eggNOG" id="COG0653">
    <property type="taxonomic scope" value="Bacteria"/>
</dbReference>
<dbReference type="HOGENOM" id="CLU_005314_3_0_12"/>
<dbReference type="OrthoDB" id="9805579at2"/>
<dbReference type="Proteomes" id="UP000005216">
    <property type="component" value="Chromosome"/>
</dbReference>
<dbReference type="GO" id="GO:0031522">
    <property type="term" value="C:cell envelope Sec protein transport complex"/>
    <property type="evidence" value="ECO:0007669"/>
    <property type="project" value="TreeGrafter"/>
</dbReference>
<dbReference type="GO" id="GO:0005829">
    <property type="term" value="C:cytosol"/>
    <property type="evidence" value="ECO:0007669"/>
    <property type="project" value="TreeGrafter"/>
</dbReference>
<dbReference type="GO" id="GO:0005886">
    <property type="term" value="C:plasma membrane"/>
    <property type="evidence" value="ECO:0007669"/>
    <property type="project" value="UniProtKB-SubCell"/>
</dbReference>
<dbReference type="GO" id="GO:0005524">
    <property type="term" value="F:ATP binding"/>
    <property type="evidence" value="ECO:0007669"/>
    <property type="project" value="UniProtKB-UniRule"/>
</dbReference>
<dbReference type="GO" id="GO:0046872">
    <property type="term" value="F:metal ion binding"/>
    <property type="evidence" value="ECO:0007669"/>
    <property type="project" value="UniProtKB-KW"/>
</dbReference>
<dbReference type="GO" id="GO:0008564">
    <property type="term" value="F:protein-exporting ATPase activity"/>
    <property type="evidence" value="ECO:0007669"/>
    <property type="project" value="UniProtKB-EC"/>
</dbReference>
<dbReference type="GO" id="GO:0065002">
    <property type="term" value="P:intracellular protein transmembrane transport"/>
    <property type="evidence" value="ECO:0007669"/>
    <property type="project" value="UniProtKB-UniRule"/>
</dbReference>
<dbReference type="GO" id="GO:0017038">
    <property type="term" value="P:protein import"/>
    <property type="evidence" value="ECO:0007669"/>
    <property type="project" value="InterPro"/>
</dbReference>
<dbReference type="GO" id="GO:0006605">
    <property type="term" value="P:protein targeting"/>
    <property type="evidence" value="ECO:0007669"/>
    <property type="project" value="UniProtKB-UniRule"/>
</dbReference>
<dbReference type="GO" id="GO:0043952">
    <property type="term" value="P:protein transport by the Sec complex"/>
    <property type="evidence" value="ECO:0007669"/>
    <property type="project" value="TreeGrafter"/>
</dbReference>
<dbReference type="CDD" id="cd17928">
    <property type="entry name" value="DEXDc_SecA"/>
    <property type="match status" value="1"/>
</dbReference>
<dbReference type="CDD" id="cd18803">
    <property type="entry name" value="SF2_C_secA"/>
    <property type="match status" value="1"/>
</dbReference>
<dbReference type="FunFam" id="3.40.50.300:FF:000113">
    <property type="entry name" value="Preprotein translocase subunit SecA"/>
    <property type="match status" value="1"/>
</dbReference>
<dbReference type="Gene3D" id="1.10.3060.10">
    <property type="entry name" value="Helical scaffold and wing domains of SecA"/>
    <property type="match status" value="1"/>
</dbReference>
<dbReference type="Gene3D" id="3.40.50.300">
    <property type="entry name" value="P-loop containing nucleotide triphosphate hydrolases"/>
    <property type="match status" value="2"/>
</dbReference>
<dbReference type="Gene3D" id="3.90.1440.10">
    <property type="entry name" value="SecA, preprotein cross-linking domain"/>
    <property type="match status" value="1"/>
</dbReference>
<dbReference type="HAMAP" id="MF_01382">
    <property type="entry name" value="SecA"/>
    <property type="match status" value="1"/>
</dbReference>
<dbReference type="InterPro" id="IPR014001">
    <property type="entry name" value="Helicase_ATP-bd"/>
</dbReference>
<dbReference type="InterPro" id="IPR001650">
    <property type="entry name" value="Helicase_C-like"/>
</dbReference>
<dbReference type="InterPro" id="IPR027417">
    <property type="entry name" value="P-loop_NTPase"/>
</dbReference>
<dbReference type="InterPro" id="IPR004027">
    <property type="entry name" value="SEC_C_motif"/>
</dbReference>
<dbReference type="InterPro" id="IPR000185">
    <property type="entry name" value="SecA"/>
</dbReference>
<dbReference type="InterPro" id="IPR020937">
    <property type="entry name" value="SecA_CS"/>
</dbReference>
<dbReference type="InterPro" id="IPR011115">
    <property type="entry name" value="SecA_DEAD"/>
</dbReference>
<dbReference type="InterPro" id="IPR014018">
    <property type="entry name" value="SecA_motor_DEAD"/>
</dbReference>
<dbReference type="InterPro" id="IPR011130">
    <property type="entry name" value="SecA_preprotein_X-link_dom"/>
</dbReference>
<dbReference type="InterPro" id="IPR044722">
    <property type="entry name" value="SecA_SF2_C"/>
</dbReference>
<dbReference type="InterPro" id="IPR011116">
    <property type="entry name" value="SecA_Wing/Scaffold"/>
</dbReference>
<dbReference type="InterPro" id="IPR036266">
    <property type="entry name" value="SecA_Wing/Scaffold_sf"/>
</dbReference>
<dbReference type="InterPro" id="IPR036670">
    <property type="entry name" value="SecA_X-link_sf"/>
</dbReference>
<dbReference type="NCBIfam" id="NF009538">
    <property type="entry name" value="PRK12904.1"/>
    <property type="match status" value="1"/>
</dbReference>
<dbReference type="NCBIfam" id="TIGR00963">
    <property type="entry name" value="secA"/>
    <property type="match status" value="1"/>
</dbReference>
<dbReference type="PANTHER" id="PTHR30612:SF0">
    <property type="entry name" value="CHLOROPLAST PROTEIN-TRANSPORTING ATPASE"/>
    <property type="match status" value="1"/>
</dbReference>
<dbReference type="PANTHER" id="PTHR30612">
    <property type="entry name" value="SECA INNER MEMBRANE COMPONENT OF SEC PROTEIN SECRETION SYSTEM"/>
    <property type="match status" value="1"/>
</dbReference>
<dbReference type="Pfam" id="PF21090">
    <property type="entry name" value="P-loop_SecA"/>
    <property type="match status" value="1"/>
</dbReference>
<dbReference type="Pfam" id="PF02810">
    <property type="entry name" value="SEC-C"/>
    <property type="match status" value="1"/>
</dbReference>
<dbReference type="Pfam" id="PF07517">
    <property type="entry name" value="SecA_DEAD"/>
    <property type="match status" value="1"/>
</dbReference>
<dbReference type="Pfam" id="PF01043">
    <property type="entry name" value="SecA_PP_bind"/>
    <property type="match status" value="1"/>
</dbReference>
<dbReference type="Pfam" id="PF07516">
    <property type="entry name" value="SecA_SW"/>
    <property type="match status" value="1"/>
</dbReference>
<dbReference type="PRINTS" id="PR00906">
    <property type="entry name" value="SECA"/>
</dbReference>
<dbReference type="SMART" id="SM00957">
    <property type="entry name" value="SecA_DEAD"/>
    <property type="match status" value="1"/>
</dbReference>
<dbReference type="SMART" id="SM00958">
    <property type="entry name" value="SecA_PP_bind"/>
    <property type="match status" value="1"/>
</dbReference>
<dbReference type="SUPFAM" id="SSF81886">
    <property type="entry name" value="Helical scaffold and wing domains of SecA"/>
    <property type="match status" value="1"/>
</dbReference>
<dbReference type="SUPFAM" id="SSF52540">
    <property type="entry name" value="P-loop containing nucleoside triphosphate hydrolases"/>
    <property type="match status" value="2"/>
</dbReference>
<dbReference type="SUPFAM" id="SSF81767">
    <property type="entry name" value="Pre-protein crosslinking domain of SecA"/>
    <property type="match status" value="1"/>
</dbReference>
<dbReference type="PROSITE" id="PS01312">
    <property type="entry name" value="SECA"/>
    <property type="match status" value="1"/>
</dbReference>
<dbReference type="PROSITE" id="PS51196">
    <property type="entry name" value="SECA_MOTOR_DEAD"/>
    <property type="match status" value="1"/>
</dbReference>
<protein>
    <recommendedName>
        <fullName evidence="1">Protein translocase subunit SecA</fullName>
        <ecNumber evidence="1">7.4.2.8</ecNumber>
    </recommendedName>
</protein>
<evidence type="ECO:0000255" key="1">
    <source>
        <dbReference type="HAMAP-Rule" id="MF_01382"/>
    </source>
</evidence>
<accession>Q0SP11</accession>
<accession>G0IQZ8</accession>
<reference key="1">
    <citation type="journal article" date="2006" name="BMC Genomics">
        <title>Comparative genome analysis: selection pressure on the Borrelia vls cassettes is essential for infectivity.</title>
        <authorList>
            <person name="Gloeckner G."/>
            <person name="Schulte-Spechtel U."/>
            <person name="Schilhabel M."/>
            <person name="Felder M."/>
            <person name="Suehnel J."/>
            <person name="Wilske B."/>
            <person name="Platzer M."/>
        </authorList>
    </citation>
    <scope>NUCLEOTIDE SEQUENCE [LARGE SCALE GENOMIC DNA]</scope>
    <source>
        <strain>PKo</strain>
    </source>
</reference>
<reference key="2">
    <citation type="journal article" date="2011" name="J. Bacteriol.">
        <title>Whole-genome sequences of two Borrelia afzelii and two Borrelia garinii Lyme disease agent isolates.</title>
        <authorList>
            <person name="Casjens S.R."/>
            <person name="Mongodin E.F."/>
            <person name="Qiu W.G."/>
            <person name="Dunn J.J."/>
            <person name="Luft B.J."/>
            <person name="Fraser-Liggett C.M."/>
            <person name="Schutzer S.E."/>
        </authorList>
    </citation>
    <scope>NUCLEOTIDE SEQUENCE [LARGE SCALE GENOMIC DNA]</scope>
    <source>
        <strain>PKo</strain>
    </source>
</reference>
<proteinExistence type="inferred from homology"/>
<comment type="function">
    <text evidence="1">Part of the Sec protein translocase complex. Interacts with the SecYEG preprotein conducting channel. Has a central role in coupling the hydrolysis of ATP to the transfer of proteins into and across the cell membrane, serving as an ATP-driven molecular motor driving the stepwise translocation of polypeptide chains across the membrane.</text>
</comment>
<comment type="catalytic activity">
    <reaction evidence="1">
        <text>ATP + H2O + cellular proteinSide 1 = ADP + phosphate + cellular proteinSide 2.</text>
        <dbReference type="EC" id="7.4.2.8"/>
    </reaction>
</comment>
<comment type="cofactor">
    <cofactor evidence="1">
        <name>Zn(2+)</name>
        <dbReference type="ChEBI" id="CHEBI:29105"/>
    </cofactor>
    <text evidence="1">May bind 1 zinc ion per subunit.</text>
</comment>
<comment type="subunit">
    <text evidence="1">Monomer and homodimer. Part of the essential Sec protein translocation apparatus which comprises SecA, SecYEG and auxiliary proteins SecDF. Other proteins may also be involved.</text>
</comment>
<comment type="subcellular location">
    <subcellularLocation>
        <location evidence="1">Cell inner membrane</location>
        <topology evidence="1">Peripheral membrane protein</topology>
        <orientation evidence="1">Cytoplasmic side</orientation>
    </subcellularLocation>
    <subcellularLocation>
        <location evidence="1">Cytoplasm</location>
    </subcellularLocation>
    <text evidence="1">Distribution is 50-50.</text>
</comment>
<comment type="similarity">
    <text evidence="1">Belongs to the SecA family.</text>
</comment>
<keyword id="KW-0067">ATP-binding</keyword>
<keyword id="KW-0997">Cell inner membrane</keyword>
<keyword id="KW-1003">Cell membrane</keyword>
<keyword id="KW-0963">Cytoplasm</keyword>
<keyword id="KW-0472">Membrane</keyword>
<keyword id="KW-0479">Metal-binding</keyword>
<keyword id="KW-0547">Nucleotide-binding</keyword>
<keyword id="KW-0653">Protein transport</keyword>
<keyword id="KW-1278">Translocase</keyword>
<keyword id="KW-0811">Translocation</keyword>
<keyword id="KW-0813">Transport</keyword>
<keyword id="KW-0862">Zinc</keyword>
<organism>
    <name type="scientific">Borreliella afzelii (strain PKo)</name>
    <name type="common">Borrelia afzelii</name>
    <dbReference type="NCBI Taxonomy" id="390236"/>
    <lineage>
        <taxon>Bacteria</taxon>
        <taxon>Pseudomonadati</taxon>
        <taxon>Spirochaetota</taxon>
        <taxon>Spirochaetia</taxon>
        <taxon>Spirochaetales</taxon>
        <taxon>Borreliaceae</taxon>
        <taxon>Borreliella</taxon>
    </lineage>
</organism>
<feature type="chain" id="PRO_0000320742" description="Protein translocase subunit SecA">
    <location>
        <begin position="1"/>
        <end position="899"/>
    </location>
</feature>
<feature type="binding site" evidence="1">
    <location>
        <position position="87"/>
    </location>
    <ligand>
        <name>ATP</name>
        <dbReference type="ChEBI" id="CHEBI:30616"/>
    </ligand>
</feature>
<feature type="binding site" evidence="1">
    <location>
        <begin position="105"/>
        <end position="109"/>
    </location>
    <ligand>
        <name>ATP</name>
        <dbReference type="ChEBI" id="CHEBI:30616"/>
    </ligand>
</feature>
<feature type="binding site" evidence="1">
    <location>
        <position position="516"/>
    </location>
    <ligand>
        <name>ATP</name>
        <dbReference type="ChEBI" id="CHEBI:30616"/>
    </ligand>
</feature>
<feature type="binding site" evidence="1">
    <location>
        <position position="884"/>
    </location>
    <ligand>
        <name>Zn(2+)</name>
        <dbReference type="ChEBI" id="CHEBI:29105"/>
    </ligand>
</feature>
<feature type="binding site" evidence="1">
    <location>
        <position position="886"/>
    </location>
    <ligand>
        <name>Zn(2+)</name>
        <dbReference type="ChEBI" id="CHEBI:29105"/>
    </ligand>
</feature>
<feature type="binding site" evidence="1">
    <location>
        <position position="895"/>
    </location>
    <ligand>
        <name>Zn(2+)</name>
        <dbReference type="ChEBI" id="CHEBI:29105"/>
    </ligand>
</feature>
<feature type="binding site" evidence="1">
    <location>
        <position position="896"/>
    </location>
    <ligand>
        <name>Zn(2+)</name>
        <dbReference type="ChEBI" id="CHEBI:29105"/>
    </ligand>
</feature>